<gene>
    <name type="primary">ydfK</name>
    <name type="ordered locus">BSU05450</name>
</gene>
<reference key="1">
    <citation type="submission" date="1997-03" db="EMBL/GenBank/DDBJ databases">
        <title>A 148 kbp sequence of the region between 35 and 47 degree of the Bacillus subtilis genome.</title>
        <authorList>
            <person name="Kasahara Y."/>
            <person name="Nakai S."/>
            <person name="Lee S."/>
            <person name="Sadaie Y."/>
            <person name="Ogasawara N."/>
        </authorList>
    </citation>
    <scope>NUCLEOTIDE SEQUENCE [GENOMIC DNA]</scope>
    <source>
        <strain>168</strain>
    </source>
</reference>
<reference key="2">
    <citation type="journal article" date="1997" name="Nature">
        <title>The complete genome sequence of the Gram-positive bacterium Bacillus subtilis.</title>
        <authorList>
            <person name="Kunst F."/>
            <person name="Ogasawara N."/>
            <person name="Moszer I."/>
            <person name="Albertini A.M."/>
            <person name="Alloni G."/>
            <person name="Azevedo V."/>
            <person name="Bertero M.G."/>
            <person name="Bessieres P."/>
            <person name="Bolotin A."/>
            <person name="Borchert S."/>
            <person name="Borriss R."/>
            <person name="Boursier L."/>
            <person name="Brans A."/>
            <person name="Braun M."/>
            <person name="Brignell S.C."/>
            <person name="Bron S."/>
            <person name="Brouillet S."/>
            <person name="Bruschi C.V."/>
            <person name="Caldwell B."/>
            <person name="Capuano V."/>
            <person name="Carter N.M."/>
            <person name="Choi S.-K."/>
            <person name="Codani J.-J."/>
            <person name="Connerton I.F."/>
            <person name="Cummings N.J."/>
            <person name="Daniel R.A."/>
            <person name="Denizot F."/>
            <person name="Devine K.M."/>
            <person name="Duesterhoeft A."/>
            <person name="Ehrlich S.D."/>
            <person name="Emmerson P.T."/>
            <person name="Entian K.-D."/>
            <person name="Errington J."/>
            <person name="Fabret C."/>
            <person name="Ferrari E."/>
            <person name="Foulger D."/>
            <person name="Fritz C."/>
            <person name="Fujita M."/>
            <person name="Fujita Y."/>
            <person name="Fuma S."/>
            <person name="Galizzi A."/>
            <person name="Galleron N."/>
            <person name="Ghim S.-Y."/>
            <person name="Glaser P."/>
            <person name="Goffeau A."/>
            <person name="Golightly E.J."/>
            <person name="Grandi G."/>
            <person name="Guiseppi G."/>
            <person name="Guy B.J."/>
            <person name="Haga K."/>
            <person name="Haiech J."/>
            <person name="Harwood C.R."/>
            <person name="Henaut A."/>
            <person name="Hilbert H."/>
            <person name="Holsappel S."/>
            <person name="Hosono S."/>
            <person name="Hullo M.-F."/>
            <person name="Itaya M."/>
            <person name="Jones L.-M."/>
            <person name="Joris B."/>
            <person name="Karamata D."/>
            <person name="Kasahara Y."/>
            <person name="Klaerr-Blanchard M."/>
            <person name="Klein C."/>
            <person name="Kobayashi Y."/>
            <person name="Koetter P."/>
            <person name="Koningstein G."/>
            <person name="Krogh S."/>
            <person name="Kumano M."/>
            <person name="Kurita K."/>
            <person name="Lapidus A."/>
            <person name="Lardinois S."/>
            <person name="Lauber J."/>
            <person name="Lazarevic V."/>
            <person name="Lee S.-M."/>
            <person name="Levine A."/>
            <person name="Liu H."/>
            <person name="Masuda S."/>
            <person name="Mauel C."/>
            <person name="Medigue C."/>
            <person name="Medina N."/>
            <person name="Mellado R.P."/>
            <person name="Mizuno M."/>
            <person name="Moestl D."/>
            <person name="Nakai S."/>
            <person name="Noback M."/>
            <person name="Noone D."/>
            <person name="O'Reilly M."/>
            <person name="Ogawa K."/>
            <person name="Ogiwara A."/>
            <person name="Oudega B."/>
            <person name="Park S.-H."/>
            <person name="Parro V."/>
            <person name="Pohl T.M."/>
            <person name="Portetelle D."/>
            <person name="Porwollik S."/>
            <person name="Prescott A.M."/>
            <person name="Presecan E."/>
            <person name="Pujic P."/>
            <person name="Purnelle B."/>
            <person name="Rapoport G."/>
            <person name="Rey M."/>
            <person name="Reynolds S."/>
            <person name="Rieger M."/>
            <person name="Rivolta C."/>
            <person name="Rocha E."/>
            <person name="Roche B."/>
            <person name="Rose M."/>
            <person name="Sadaie Y."/>
            <person name="Sato T."/>
            <person name="Scanlan E."/>
            <person name="Schleich S."/>
            <person name="Schroeter R."/>
            <person name="Scoffone F."/>
            <person name="Sekiguchi J."/>
            <person name="Sekowska A."/>
            <person name="Seror S.J."/>
            <person name="Serror P."/>
            <person name="Shin B.-S."/>
            <person name="Soldo B."/>
            <person name="Sorokin A."/>
            <person name="Tacconi E."/>
            <person name="Takagi T."/>
            <person name="Takahashi H."/>
            <person name="Takemaru K."/>
            <person name="Takeuchi M."/>
            <person name="Tamakoshi A."/>
            <person name="Tanaka T."/>
            <person name="Terpstra P."/>
            <person name="Tognoni A."/>
            <person name="Tosato V."/>
            <person name="Uchiyama S."/>
            <person name="Vandenbol M."/>
            <person name="Vannier F."/>
            <person name="Vassarotti A."/>
            <person name="Viari A."/>
            <person name="Wambutt R."/>
            <person name="Wedler E."/>
            <person name="Wedler H."/>
            <person name="Weitzenegger T."/>
            <person name="Winters P."/>
            <person name="Wipat A."/>
            <person name="Yamamoto H."/>
            <person name="Yamane K."/>
            <person name="Yasumoto K."/>
            <person name="Yata K."/>
            <person name="Yoshida K."/>
            <person name="Yoshikawa H.-F."/>
            <person name="Zumstein E."/>
            <person name="Yoshikawa H."/>
            <person name="Danchin A."/>
        </authorList>
    </citation>
    <scope>NUCLEOTIDE SEQUENCE [LARGE SCALE GENOMIC DNA]</scope>
    <source>
        <strain>168</strain>
    </source>
</reference>
<reference key="3">
    <citation type="journal article" date="1999" name="Mol. Microbiol.">
        <title>Mta, a global MerR-type regulator of the Bacillus subtilis multidrug-efflux transporters.</title>
        <authorList>
            <person name="Baranova N.N."/>
            <person name="Danchin A."/>
            <person name="Neyfakh A.A."/>
        </authorList>
    </citation>
    <scope>INDUCTION</scope>
    <source>
        <strain>168 / BD170</strain>
    </source>
</reference>
<comment type="subcellular location">
    <subcellularLocation>
        <location evidence="3">Cell membrane</location>
        <topology evidence="3">Multi-pass membrane protein</topology>
    </subcellularLocation>
</comment>
<comment type="induction">
    <text evidence="2">Up-regulated by mta.</text>
</comment>
<evidence type="ECO:0000255" key="1"/>
<evidence type="ECO:0000269" key="2">
    <source>
    </source>
</evidence>
<evidence type="ECO:0000305" key="3"/>
<organism>
    <name type="scientific">Bacillus subtilis (strain 168)</name>
    <dbReference type="NCBI Taxonomy" id="224308"/>
    <lineage>
        <taxon>Bacteria</taxon>
        <taxon>Bacillati</taxon>
        <taxon>Bacillota</taxon>
        <taxon>Bacilli</taxon>
        <taxon>Bacillales</taxon>
        <taxon>Bacillaceae</taxon>
        <taxon>Bacillus</taxon>
    </lineage>
</organism>
<keyword id="KW-1003">Cell membrane</keyword>
<keyword id="KW-0472">Membrane</keyword>
<keyword id="KW-1185">Reference proteome</keyword>
<keyword id="KW-0812">Transmembrane</keyword>
<keyword id="KW-1133">Transmembrane helix</keyword>
<sequence>MFGTIFNTVMIIAGSIIGGIFKKGIKDEYQDILMQAMGFAAVALGINAITQHLPDSKYPILFIVSLAIGGLLGQIINLELRFNKLVNKFSKSNLAEGLSTAVLLFCIGSLSILGPVEAALHGDYTYLLTNGMLDGITSIVLASTFGFGIAAAALVLFSWQGSIYLFAQVMESAINTDLINEITIVGGILILSSGLSILGIKKFKTLNLLPSLLIPPVVIFVIHAFGLRF</sequence>
<name>YDFK_BACSU</name>
<proteinExistence type="evidence at transcript level"/>
<feature type="chain" id="PRO_0000378493" description="Uncharacterized membrane protein YdfK">
    <location>
        <begin position="1"/>
        <end position="229"/>
    </location>
</feature>
<feature type="transmembrane region" description="Helical" evidence="1">
    <location>
        <begin position="1"/>
        <end position="21"/>
    </location>
</feature>
<feature type="transmembrane region" description="Helical" evidence="1">
    <location>
        <begin position="32"/>
        <end position="52"/>
    </location>
</feature>
<feature type="transmembrane region" description="Helical" evidence="1">
    <location>
        <begin position="58"/>
        <end position="78"/>
    </location>
</feature>
<feature type="transmembrane region" description="Helical" evidence="1">
    <location>
        <begin position="100"/>
        <end position="120"/>
    </location>
</feature>
<feature type="transmembrane region" description="Helical" evidence="1">
    <location>
        <begin position="139"/>
        <end position="159"/>
    </location>
</feature>
<feature type="transmembrane region" description="Helical" evidence="1">
    <location>
        <begin position="178"/>
        <end position="198"/>
    </location>
</feature>
<feature type="transmembrane region" description="Helical" evidence="1">
    <location>
        <begin position="206"/>
        <end position="226"/>
    </location>
</feature>
<accession>P96689</accession>
<accession>Q797G2</accession>
<dbReference type="EMBL" id="AB001488">
    <property type="protein sequence ID" value="BAA19379.1"/>
    <property type="molecule type" value="Genomic_DNA"/>
</dbReference>
<dbReference type="EMBL" id="AL009126">
    <property type="protein sequence ID" value="CAB12352.1"/>
    <property type="molecule type" value="Genomic_DNA"/>
</dbReference>
<dbReference type="PIR" id="A69781">
    <property type="entry name" value="A69781"/>
</dbReference>
<dbReference type="RefSeq" id="NP_388426.1">
    <property type="nucleotide sequence ID" value="NC_000964.3"/>
</dbReference>
<dbReference type="RefSeq" id="WP_003242513.1">
    <property type="nucleotide sequence ID" value="NZ_OZ025638.1"/>
</dbReference>
<dbReference type="FunCoup" id="P96689">
    <property type="interactions" value="187"/>
</dbReference>
<dbReference type="STRING" id="224308.BSU05450"/>
<dbReference type="PaxDb" id="224308-BSU05450"/>
<dbReference type="EnsemblBacteria" id="CAB12352">
    <property type="protein sequence ID" value="CAB12352"/>
    <property type="gene ID" value="BSU_05450"/>
</dbReference>
<dbReference type="GeneID" id="939896"/>
<dbReference type="KEGG" id="bsu:BSU05450"/>
<dbReference type="PATRIC" id="fig|224308.179.peg.585"/>
<dbReference type="eggNOG" id="COG1811">
    <property type="taxonomic scope" value="Bacteria"/>
</dbReference>
<dbReference type="InParanoid" id="P96689"/>
<dbReference type="OrthoDB" id="9797976at2"/>
<dbReference type="PhylomeDB" id="P96689"/>
<dbReference type="BioCyc" id="BSUB:BSU05450-MONOMER"/>
<dbReference type="Proteomes" id="UP000001570">
    <property type="component" value="Chromosome"/>
</dbReference>
<dbReference type="GO" id="GO:0005886">
    <property type="term" value="C:plasma membrane"/>
    <property type="evidence" value="ECO:0000318"/>
    <property type="project" value="GO_Central"/>
</dbReference>
<dbReference type="InterPro" id="IPR007563">
    <property type="entry name" value="DUF554"/>
</dbReference>
<dbReference type="PANTHER" id="PTHR36111:SF2">
    <property type="entry name" value="INNER MEMBRANE PROTEIN"/>
    <property type="match status" value="1"/>
</dbReference>
<dbReference type="PANTHER" id="PTHR36111">
    <property type="entry name" value="INNER MEMBRANE PROTEIN-RELATED"/>
    <property type="match status" value="1"/>
</dbReference>
<dbReference type="Pfam" id="PF04474">
    <property type="entry name" value="DUF554"/>
    <property type="match status" value="1"/>
</dbReference>
<protein>
    <recommendedName>
        <fullName>Uncharacterized membrane protein YdfK</fullName>
    </recommendedName>
</protein>